<name>RPOB_THEPX</name>
<gene>
    <name evidence="1" type="primary">rpoB</name>
    <name type="ordered locus">Teth514_0859</name>
</gene>
<sequence>MVRPVQVGNKTRMSFAKIDEVLQMPDLIEVQKKSYKWFLEEGLREVFREISPIESFTGNLALEFVDYRLENNPKYSVEECKDRDTTYAVPMKVKVRLTNRETGEIKESEVFMGDFPLMTEKGTFIINGAERVIVSQLVRSPGVYYEQQFDKFGKKLISATVIPNRGAWLEYEEDSNDIVYVRIDRTRKVPITVLLRALGYSTDIQILDLLGEEEKLKATLDKDTTKSEEEALIEIYKRLRPGEPPTVESAKSLLYALFFDAKRYDLAKVGRYKFNKKLALKARIANLKSAKKIVNPVTGEILVEEGEKISKEKAEEIQNCGINVVEVLVEGKVVKVIGNNTVDINKYPMPYDVSSLNIKEAVNLSILKEILDNFSDEEAVINEIKNRMDELVPKHITKDDIIATISYQLNLTHGIGSIDDIDHLGNRRLRSVGELLQNQFRIGLARLERVVKERMTIQDVNEITPQNLINIRPVVAAIREFFGSSQLSQFMDQTNPLAELTHKRRVSALGPGGLSRERAGFEVRDVHYSHYGRICPIETPEGPNIGLIGSLTTYARVNEYGFIEAPYRRVDKTTGTVTDEIVYMTADEEDEYIIAQANEPLDENNRFINEKVVCRLKEEIIAVPPTEVDFMDVSPKQIVSVATSMIPFLENDDANRALMGSNMQRQAVPLIKPEAPIIGTGIEYKAAVDSGVVVLAKNDGVVEKVAADKVVIRTKDGRRDEYNLLKFKRSNQGTCINQRPIVNEGDEVKKGQVICDGPSTDHGELALGKNVLVGFMLWEGYNYEDAILISEELVRDDSLTSIHIEEYDAEARDTKLGPEEITREIPNVGEDALKDLDERGIIRIGAEVTAGDILVGKVTPKGETELTAEERLLRAIFGEKAREVRDTSLRVPHGESGIVVDVKVYSRENGDELPPGVNQMVRVFVAQKRKISVGDKMAGRHGNKGVISRILPVEDMPFLPDGTPLQICLNPLGVPSRMNIGQVLEVHLGLVAKALGWQIATPVFDGATEEDIQELLAKSGFSPDGKVQLYDGRTGEPFDNKVTVGYMYMLKLHHLVDDKMHARSTGPYSLVTQQPLGGKAQFGGQRFGEMEVWALEAYGAAHTLQEILTVKSDDVSGRVKTYEAIVKGENIPEPGIPESFKVLVKELQSLALDVKVITEDNQEIPLKEFEDDDDSDVPDATLNINIEGREDTPPEEVYEEGYEEGFEEESEELPEDIDFEPDSFDIENDDLDLEDFDI</sequence>
<protein>
    <recommendedName>
        <fullName evidence="1">DNA-directed RNA polymerase subunit beta</fullName>
        <shortName evidence="1">RNAP subunit beta</shortName>
        <ecNumber evidence="1">2.7.7.6</ecNumber>
    </recommendedName>
    <alternativeName>
        <fullName evidence="1">RNA polymerase subunit beta</fullName>
    </alternativeName>
    <alternativeName>
        <fullName evidence="1">Transcriptase subunit beta</fullName>
    </alternativeName>
</protein>
<keyword id="KW-0240">DNA-directed RNA polymerase</keyword>
<keyword id="KW-0548">Nucleotidyltransferase</keyword>
<keyword id="KW-0804">Transcription</keyword>
<keyword id="KW-0808">Transferase</keyword>
<reference key="1">
    <citation type="submission" date="2008-01" db="EMBL/GenBank/DDBJ databases">
        <title>Complete sequence of Thermoanaerobacter sp. X514.</title>
        <authorList>
            <consortium name="US DOE Joint Genome Institute"/>
            <person name="Copeland A."/>
            <person name="Lucas S."/>
            <person name="Lapidus A."/>
            <person name="Barry K."/>
            <person name="Glavina del Rio T."/>
            <person name="Dalin E."/>
            <person name="Tice H."/>
            <person name="Pitluck S."/>
            <person name="Bruce D."/>
            <person name="Goodwin L."/>
            <person name="Saunders E."/>
            <person name="Brettin T."/>
            <person name="Detter J.C."/>
            <person name="Han C."/>
            <person name="Schmutz J."/>
            <person name="Larimer F."/>
            <person name="Land M."/>
            <person name="Hauser L."/>
            <person name="Kyrpides N."/>
            <person name="Kim E."/>
            <person name="Hemme C."/>
            <person name="Fields M.W."/>
            <person name="He Z."/>
            <person name="Zhou J."/>
            <person name="Richardson P."/>
        </authorList>
    </citation>
    <scope>NUCLEOTIDE SEQUENCE [LARGE SCALE GENOMIC DNA]</scope>
    <source>
        <strain>X514</strain>
    </source>
</reference>
<evidence type="ECO:0000255" key="1">
    <source>
        <dbReference type="HAMAP-Rule" id="MF_01321"/>
    </source>
</evidence>
<evidence type="ECO:0000256" key="2">
    <source>
        <dbReference type="SAM" id="MobiDB-lite"/>
    </source>
</evidence>
<dbReference type="EC" id="2.7.7.6" evidence="1"/>
<dbReference type="EMBL" id="CP000923">
    <property type="protein sequence ID" value="ABY92161.1"/>
    <property type="molecule type" value="Genomic_DNA"/>
</dbReference>
<dbReference type="RefSeq" id="WP_003868699.1">
    <property type="nucleotide sequence ID" value="NC_010320.1"/>
</dbReference>
<dbReference type="SMR" id="B0K5G8"/>
<dbReference type="KEGG" id="tex:Teth514_0859"/>
<dbReference type="HOGENOM" id="CLU_000524_4_1_9"/>
<dbReference type="Proteomes" id="UP000002155">
    <property type="component" value="Chromosome"/>
</dbReference>
<dbReference type="GO" id="GO:0000428">
    <property type="term" value="C:DNA-directed RNA polymerase complex"/>
    <property type="evidence" value="ECO:0007669"/>
    <property type="project" value="UniProtKB-KW"/>
</dbReference>
<dbReference type="GO" id="GO:0003677">
    <property type="term" value="F:DNA binding"/>
    <property type="evidence" value="ECO:0007669"/>
    <property type="project" value="UniProtKB-UniRule"/>
</dbReference>
<dbReference type="GO" id="GO:0003899">
    <property type="term" value="F:DNA-directed RNA polymerase activity"/>
    <property type="evidence" value="ECO:0007669"/>
    <property type="project" value="UniProtKB-UniRule"/>
</dbReference>
<dbReference type="GO" id="GO:0032549">
    <property type="term" value="F:ribonucleoside binding"/>
    <property type="evidence" value="ECO:0007669"/>
    <property type="project" value="InterPro"/>
</dbReference>
<dbReference type="GO" id="GO:0006351">
    <property type="term" value="P:DNA-templated transcription"/>
    <property type="evidence" value="ECO:0007669"/>
    <property type="project" value="UniProtKB-UniRule"/>
</dbReference>
<dbReference type="CDD" id="cd00653">
    <property type="entry name" value="RNA_pol_B_RPB2"/>
    <property type="match status" value="1"/>
</dbReference>
<dbReference type="FunFam" id="3.90.1800.10:FF:000001">
    <property type="entry name" value="DNA-directed RNA polymerase subunit beta"/>
    <property type="match status" value="1"/>
</dbReference>
<dbReference type="Gene3D" id="2.40.50.100">
    <property type="match status" value="1"/>
</dbReference>
<dbReference type="Gene3D" id="2.40.50.150">
    <property type="match status" value="1"/>
</dbReference>
<dbReference type="Gene3D" id="3.90.1100.10">
    <property type="match status" value="2"/>
</dbReference>
<dbReference type="Gene3D" id="2.40.270.10">
    <property type="entry name" value="DNA-directed RNA polymerase, subunit 2, domain 6"/>
    <property type="match status" value="1"/>
</dbReference>
<dbReference type="Gene3D" id="3.90.1800.10">
    <property type="entry name" value="RNA polymerase alpha subunit dimerisation domain"/>
    <property type="match status" value="1"/>
</dbReference>
<dbReference type="Gene3D" id="3.90.1110.10">
    <property type="entry name" value="RNA polymerase Rpb2, domain 2"/>
    <property type="match status" value="1"/>
</dbReference>
<dbReference type="HAMAP" id="MF_01321">
    <property type="entry name" value="RNApol_bact_RpoB"/>
    <property type="match status" value="1"/>
</dbReference>
<dbReference type="InterPro" id="IPR019462">
    <property type="entry name" value="DNA-dir_RNA_pol_bsu_external_1"/>
</dbReference>
<dbReference type="InterPro" id="IPR015712">
    <property type="entry name" value="DNA-dir_RNA_pol_su2"/>
</dbReference>
<dbReference type="InterPro" id="IPR007120">
    <property type="entry name" value="DNA-dir_RNAP_su2_dom"/>
</dbReference>
<dbReference type="InterPro" id="IPR037033">
    <property type="entry name" value="DNA-dir_RNAP_su2_hyb_sf"/>
</dbReference>
<dbReference type="InterPro" id="IPR010243">
    <property type="entry name" value="RNA_pol_bsu_bac"/>
</dbReference>
<dbReference type="InterPro" id="IPR007121">
    <property type="entry name" value="RNA_pol_bsu_CS"/>
</dbReference>
<dbReference type="InterPro" id="IPR007644">
    <property type="entry name" value="RNA_pol_bsu_protrusion"/>
</dbReference>
<dbReference type="InterPro" id="IPR007642">
    <property type="entry name" value="RNA_pol_Rpb2_2"/>
</dbReference>
<dbReference type="InterPro" id="IPR037034">
    <property type="entry name" value="RNA_pol_Rpb2_2_sf"/>
</dbReference>
<dbReference type="InterPro" id="IPR007645">
    <property type="entry name" value="RNA_pol_Rpb2_3"/>
</dbReference>
<dbReference type="InterPro" id="IPR007641">
    <property type="entry name" value="RNA_pol_Rpb2_7"/>
</dbReference>
<dbReference type="InterPro" id="IPR014724">
    <property type="entry name" value="RNA_pol_RPB2_OB-fold"/>
</dbReference>
<dbReference type="NCBIfam" id="NF001616">
    <property type="entry name" value="PRK00405.1"/>
    <property type="match status" value="1"/>
</dbReference>
<dbReference type="NCBIfam" id="TIGR02013">
    <property type="entry name" value="rpoB"/>
    <property type="match status" value="1"/>
</dbReference>
<dbReference type="PANTHER" id="PTHR20856">
    <property type="entry name" value="DNA-DIRECTED RNA POLYMERASE I SUBUNIT 2"/>
    <property type="match status" value="1"/>
</dbReference>
<dbReference type="Pfam" id="PF04563">
    <property type="entry name" value="RNA_pol_Rpb2_1"/>
    <property type="match status" value="1"/>
</dbReference>
<dbReference type="Pfam" id="PF04561">
    <property type="entry name" value="RNA_pol_Rpb2_2"/>
    <property type="match status" value="2"/>
</dbReference>
<dbReference type="Pfam" id="PF04565">
    <property type="entry name" value="RNA_pol_Rpb2_3"/>
    <property type="match status" value="1"/>
</dbReference>
<dbReference type="Pfam" id="PF10385">
    <property type="entry name" value="RNA_pol_Rpb2_45"/>
    <property type="match status" value="1"/>
</dbReference>
<dbReference type="Pfam" id="PF00562">
    <property type="entry name" value="RNA_pol_Rpb2_6"/>
    <property type="match status" value="1"/>
</dbReference>
<dbReference type="Pfam" id="PF04560">
    <property type="entry name" value="RNA_pol_Rpb2_7"/>
    <property type="match status" value="1"/>
</dbReference>
<dbReference type="SUPFAM" id="SSF64484">
    <property type="entry name" value="beta and beta-prime subunits of DNA dependent RNA-polymerase"/>
    <property type="match status" value="1"/>
</dbReference>
<dbReference type="PROSITE" id="PS01166">
    <property type="entry name" value="RNA_POL_BETA"/>
    <property type="match status" value="1"/>
</dbReference>
<comment type="function">
    <text evidence="1">DNA-dependent RNA polymerase catalyzes the transcription of DNA into RNA using the four ribonucleoside triphosphates as substrates.</text>
</comment>
<comment type="catalytic activity">
    <reaction evidence="1">
        <text>RNA(n) + a ribonucleoside 5'-triphosphate = RNA(n+1) + diphosphate</text>
        <dbReference type="Rhea" id="RHEA:21248"/>
        <dbReference type="Rhea" id="RHEA-COMP:14527"/>
        <dbReference type="Rhea" id="RHEA-COMP:17342"/>
        <dbReference type="ChEBI" id="CHEBI:33019"/>
        <dbReference type="ChEBI" id="CHEBI:61557"/>
        <dbReference type="ChEBI" id="CHEBI:140395"/>
        <dbReference type="EC" id="2.7.7.6"/>
    </reaction>
</comment>
<comment type="subunit">
    <text evidence="1">The RNAP catalytic core consists of 2 alpha, 1 beta, 1 beta' and 1 omega subunit. When a sigma factor is associated with the core the holoenzyme is formed, which can initiate transcription.</text>
</comment>
<comment type="similarity">
    <text evidence="1">Belongs to the RNA polymerase beta chain family.</text>
</comment>
<organism>
    <name type="scientific">Thermoanaerobacter sp. (strain X514)</name>
    <dbReference type="NCBI Taxonomy" id="399726"/>
    <lineage>
        <taxon>Bacteria</taxon>
        <taxon>Bacillati</taxon>
        <taxon>Bacillota</taxon>
        <taxon>Clostridia</taxon>
        <taxon>Thermoanaerobacterales</taxon>
        <taxon>Thermoanaerobacteraceae</taxon>
        <taxon>Thermoanaerobacter</taxon>
    </lineage>
</organism>
<accession>B0K5G8</accession>
<proteinExistence type="inferred from homology"/>
<feature type="chain" id="PRO_1000165831" description="DNA-directed RNA polymerase subunit beta">
    <location>
        <begin position="1"/>
        <end position="1238"/>
    </location>
</feature>
<feature type="region of interest" description="Disordered" evidence="2">
    <location>
        <begin position="1186"/>
        <end position="1238"/>
    </location>
</feature>
<feature type="compositionally biased region" description="Acidic residues" evidence="2">
    <location>
        <begin position="1193"/>
        <end position="1238"/>
    </location>
</feature>